<reference key="1">
    <citation type="journal article" date="2005" name="Mol. Hum. Reprod.">
        <title>A novel protein Depp, which is induced by progesterone in human endometrial stromal cells activates Elk-1 transcription factor.</title>
        <authorList>
            <person name="Watanabe H."/>
            <person name="Nonoguchi K."/>
            <person name="Sakurai T."/>
            <person name="Masuda T."/>
            <person name="Itoh K."/>
            <person name="Fujita J."/>
        </authorList>
    </citation>
    <scope>NUCLEOTIDE SEQUENCE [MRNA]</scope>
    <scope>INDUCTION</scope>
    <scope>TISSUE SPECIFICITY</scope>
    <scope>DEVELOPMENTAL STAGE</scope>
    <source>
        <tissue>Endometrium</tissue>
    </source>
</reference>
<reference key="2">
    <citation type="submission" date="1999-03" db="EMBL/GenBank/DDBJ databases">
        <title>Molecular cloning and characterization of a novel fasting induced gene transcript from adipose tissue.</title>
        <authorList>
            <person name="Matsuda M."/>
            <person name="Kuriyama H."/>
            <person name="Kishida K."/>
            <person name="Funahashi T."/>
            <person name="Shimomura I."/>
            <person name="Yamashita S."/>
            <person name="Matsuzawa Y."/>
        </authorList>
    </citation>
    <scope>NUCLEOTIDE SEQUENCE [MRNA]</scope>
    <source>
        <tissue>Adipose tissue</tissue>
    </source>
</reference>
<reference key="3">
    <citation type="journal article" date="2001" name="Genome Res.">
        <title>Towards a catalog of human genes and proteins: sequencing and analysis of 500 novel complete protein coding human cDNAs.</title>
        <authorList>
            <person name="Wiemann S."/>
            <person name="Weil B."/>
            <person name="Wellenreuther R."/>
            <person name="Gassenhuber J."/>
            <person name="Glassl S."/>
            <person name="Ansorge W."/>
            <person name="Boecher M."/>
            <person name="Bloecker H."/>
            <person name="Bauersachs S."/>
            <person name="Blum H."/>
            <person name="Lauber J."/>
            <person name="Duesterhoeft A."/>
            <person name="Beyer A."/>
            <person name="Koehrer K."/>
            <person name="Strack N."/>
            <person name="Mewes H.-W."/>
            <person name="Ottenwaelder B."/>
            <person name="Obermaier B."/>
            <person name="Tampe J."/>
            <person name="Heubner D."/>
            <person name="Wambutt R."/>
            <person name="Korn B."/>
            <person name="Klein M."/>
            <person name="Poustka A."/>
        </authorList>
    </citation>
    <scope>NUCLEOTIDE SEQUENCE [LARGE SCALE MRNA]</scope>
    <source>
        <tissue>Fetal brain</tissue>
    </source>
</reference>
<reference key="4">
    <citation type="journal article" date="2004" name="Nat. Genet.">
        <title>Complete sequencing and characterization of 21,243 full-length human cDNAs.</title>
        <authorList>
            <person name="Ota T."/>
            <person name="Suzuki Y."/>
            <person name="Nishikawa T."/>
            <person name="Otsuki T."/>
            <person name="Sugiyama T."/>
            <person name="Irie R."/>
            <person name="Wakamatsu A."/>
            <person name="Hayashi K."/>
            <person name="Sato H."/>
            <person name="Nagai K."/>
            <person name="Kimura K."/>
            <person name="Makita H."/>
            <person name="Sekine M."/>
            <person name="Obayashi M."/>
            <person name="Nishi T."/>
            <person name="Shibahara T."/>
            <person name="Tanaka T."/>
            <person name="Ishii S."/>
            <person name="Yamamoto J."/>
            <person name="Saito K."/>
            <person name="Kawai Y."/>
            <person name="Isono Y."/>
            <person name="Nakamura Y."/>
            <person name="Nagahari K."/>
            <person name="Murakami K."/>
            <person name="Yasuda T."/>
            <person name="Iwayanagi T."/>
            <person name="Wagatsuma M."/>
            <person name="Shiratori A."/>
            <person name="Sudo H."/>
            <person name="Hosoiri T."/>
            <person name="Kaku Y."/>
            <person name="Kodaira H."/>
            <person name="Kondo H."/>
            <person name="Sugawara M."/>
            <person name="Takahashi M."/>
            <person name="Kanda K."/>
            <person name="Yokoi T."/>
            <person name="Furuya T."/>
            <person name="Kikkawa E."/>
            <person name="Omura Y."/>
            <person name="Abe K."/>
            <person name="Kamihara K."/>
            <person name="Katsuta N."/>
            <person name="Sato K."/>
            <person name="Tanikawa M."/>
            <person name="Yamazaki M."/>
            <person name="Ninomiya K."/>
            <person name="Ishibashi T."/>
            <person name="Yamashita H."/>
            <person name="Murakawa K."/>
            <person name="Fujimori K."/>
            <person name="Tanai H."/>
            <person name="Kimata M."/>
            <person name="Watanabe M."/>
            <person name="Hiraoka S."/>
            <person name="Chiba Y."/>
            <person name="Ishida S."/>
            <person name="Ono Y."/>
            <person name="Takiguchi S."/>
            <person name="Watanabe S."/>
            <person name="Yosida M."/>
            <person name="Hotuta T."/>
            <person name="Kusano J."/>
            <person name="Kanehori K."/>
            <person name="Takahashi-Fujii A."/>
            <person name="Hara H."/>
            <person name="Tanase T.-O."/>
            <person name="Nomura Y."/>
            <person name="Togiya S."/>
            <person name="Komai F."/>
            <person name="Hara R."/>
            <person name="Takeuchi K."/>
            <person name="Arita M."/>
            <person name="Imose N."/>
            <person name="Musashino K."/>
            <person name="Yuuki H."/>
            <person name="Oshima A."/>
            <person name="Sasaki N."/>
            <person name="Aotsuka S."/>
            <person name="Yoshikawa Y."/>
            <person name="Matsunawa H."/>
            <person name="Ichihara T."/>
            <person name="Shiohata N."/>
            <person name="Sano S."/>
            <person name="Moriya S."/>
            <person name="Momiyama H."/>
            <person name="Satoh N."/>
            <person name="Takami S."/>
            <person name="Terashima Y."/>
            <person name="Suzuki O."/>
            <person name="Nakagawa S."/>
            <person name="Senoh A."/>
            <person name="Mizoguchi H."/>
            <person name="Goto Y."/>
            <person name="Shimizu F."/>
            <person name="Wakebe H."/>
            <person name="Hishigaki H."/>
            <person name="Watanabe T."/>
            <person name="Sugiyama A."/>
            <person name="Takemoto M."/>
            <person name="Kawakami B."/>
            <person name="Yamazaki M."/>
            <person name="Watanabe K."/>
            <person name="Kumagai A."/>
            <person name="Itakura S."/>
            <person name="Fukuzumi Y."/>
            <person name="Fujimori Y."/>
            <person name="Komiyama M."/>
            <person name="Tashiro H."/>
            <person name="Tanigami A."/>
            <person name="Fujiwara T."/>
            <person name="Ono T."/>
            <person name="Yamada K."/>
            <person name="Fujii Y."/>
            <person name="Ozaki K."/>
            <person name="Hirao M."/>
            <person name="Ohmori Y."/>
            <person name="Kawabata A."/>
            <person name="Hikiji T."/>
            <person name="Kobatake N."/>
            <person name="Inagaki H."/>
            <person name="Ikema Y."/>
            <person name="Okamoto S."/>
            <person name="Okitani R."/>
            <person name="Kawakami T."/>
            <person name="Noguchi S."/>
            <person name="Itoh T."/>
            <person name="Shigeta K."/>
            <person name="Senba T."/>
            <person name="Matsumura K."/>
            <person name="Nakajima Y."/>
            <person name="Mizuno T."/>
            <person name="Morinaga M."/>
            <person name="Sasaki M."/>
            <person name="Togashi T."/>
            <person name="Oyama M."/>
            <person name="Hata H."/>
            <person name="Watanabe M."/>
            <person name="Komatsu T."/>
            <person name="Mizushima-Sugano J."/>
            <person name="Satoh T."/>
            <person name="Shirai Y."/>
            <person name="Takahashi Y."/>
            <person name="Nakagawa K."/>
            <person name="Okumura K."/>
            <person name="Nagase T."/>
            <person name="Nomura N."/>
            <person name="Kikuchi H."/>
            <person name="Masuho Y."/>
            <person name="Yamashita R."/>
            <person name="Nakai K."/>
            <person name="Yada T."/>
            <person name="Nakamura Y."/>
            <person name="Ohara O."/>
            <person name="Isogai T."/>
            <person name="Sugano S."/>
        </authorList>
    </citation>
    <scope>NUCLEOTIDE SEQUENCE [LARGE SCALE MRNA]</scope>
    <source>
        <tissue>Placenta</tissue>
        <tissue>Thalamus</tissue>
    </source>
</reference>
<reference key="5">
    <citation type="journal article" date="2004" name="Nature">
        <title>The DNA sequence and comparative analysis of human chromosome 10.</title>
        <authorList>
            <person name="Deloukas P."/>
            <person name="Earthrowl M.E."/>
            <person name="Grafham D.V."/>
            <person name="Rubenfield M."/>
            <person name="French L."/>
            <person name="Steward C.A."/>
            <person name="Sims S.K."/>
            <person name="Jones M.C."/>
            <person name="Searle S."/>
            <person name="Scott C."/>
            <person name="Howe K."/>
            <person name="Hunt S.E."/>
            <person name="Andrews T.D."/>
            <person name="Gilbert J.G.R."/>
            <person name="Swarbreck D."/>
            <person name="Ashurst J.L."/>
            <person name="Taylor A."/>
            <person name="Battles J."/>
            <person name="Bird C.P."/>
            <person name="Ainscough R."/>
            <person name="Almeida J.P."/>
            <person name="Ashwell R.I.S."/>
            <person name="Ambrose K.D."/>
            <person name="Babbage A.K."/>
            <person name="Bagguley C.L."/>
            <person name="Bailey J."/>
            <person name="Banerjee R."/>
            <person name="Bates K."/>
            <person name="Beasley H."/>
            <person name="Bray-Allen S."/>
            <person name="Brown A.J."/>
            <person name="Brown J.Y."/>
            <person name="Burford D.C."/>
            <person name="Burrill W."/>
            <person name="Burton J."/>
            <person name="Cahill P."/>
            <person name="Camire D."/>
            <person name="Carter N.P."/>
            <person name="Chapman J.C."/>
            <person name="Clark S.Y."/>
            <person name="Clarke G."/>
            <person name="Clee C.M."/>
            <person name="Clegg S."/>
            <person name="Corby N."/>
            <person name="Coulson A."/>
            <person name="Dhami P."/>
            <person name="Dutta I."/>
            <person name="Dunn M."/>
            <person name="Faulkner L."/>
            <person name="Frankish A."/>
            <person name="Frankland J.A."/>
            <person name="Garner P."/>
            <person name="Garnett J."/>
            <person name="Gribble S."/>
            <person name="Griffiths C."/>
            <person name="Grocock R."/>
            <person name="Gustafson E."/>
            <person name="Hammond S."/>
            <person name="Harley J.L."/>
            <person name="Hart E."/>
            <person name="Heath P.D."/>
            <person name="Ho T.P."/>
            <person name="Hopkins B."/>
            <person name="Horne J."/>
            <person name="Howden P.J."/>
            <person name="Huckle E."/>
            <person name="Hynds C."/>
            <person name="Johnson C."/>
            <person name="Johnson D."/>
            <person name="Kana A."/>
            <person name="Kay M."/>
            <person name="Kimberley A.M."/>
            <person name="Kershaw J.K."/>
            <person name="Kokkinaki M."/>
            <person name="Laird G.K."/>
            <person name="Lawlor S."/>
            <person name="Lee H.M."/>
            <person name="Leongamornlert D.A."/>
            <person name="Laird G."/>
            <person name="Lloyd C."/>
            <person name="Lloyd D.M."/>
            <person name="Loveland J."/>
            <person name="Lovell J."/>
            <person name="McLaren S."/>
            <person name="McLay K.E."/>
            <person name="McMurray A."/>
            <person name="Mashreghi-Mohammadi M."/>
            <person name="Matthews L."/>
            <person name="Milne S."/>
            <person name="Nickerson T."/>
            <person name="Nguyen M."/>
            <person name="Overton-Larty E."/>
            <person name="Palmer S.A."/>
            <person name="Pearce A.V."/>
            <person name="Peck A.I."/>
            <person name="Pelan S."/>
            <person name="Phillimore B."/>
            <person name="Porter K."/>
            <person name="Rice C.M."/>
            <person name="Rogosin A."/>
            <person name="Ross M.T."/>
            <person name="Sarafidou T."/>
            <person name="Sehra H.K."/>
            <person name="Shownkeen R."/>
            <person name="Skuce C.D."/>
            <person name="Smith M."/>
            <person name="Standring L."/>
            <person name="Sycamore N."/>
            <person name="Tester J."/>
            <person name="Thorpe A."/>
            <person name="Torcasso W."/>
            <person name="Tracey A."/>
            <person name="Tromans A."/>
            <person name="Tsolas J."/>
            <person name="Wall M."/>
            <person name="Walsh J."/>
            <person name="Wang H."/>
            <person name="Weinstock K."/>
            <person name="West A.P."/>
            <person name="Willey D.L."/>
            <person name="Whitehead S.L."/>
            <person name="Wilming L."/>
            <person name="Wray P.W."/>
            <person name="Young L."/>
            <person name="Chen Y."/>
            <person name="Lovering R.C."/>
            <person name="Moschonas N.K."/>
            <person name="Siebert R."/>
            <person name="Fechtel K."/>
            <person name="Bentley D."/>
            <person name="Durbin R.M."/>
            <person name="Hubbard T."/>
            <person name="Doucette-Stamm L."/>
            <person name="Beck S."/>
            <person name="Smith D.R."/>
            <person name="Rogers J."/>
        </authorList>
    </citation>
    <scope>NUCLEOTIDE SEQUENCE [LARGE SCALE GENOMIC DNA]</scope>
</reference>
<reference key="6">
    <citation type="submission" date="2005-07" db="EMBL/GenBank/DDBJ databases">
        <authorList>
            <person name="Mural R.J."/>
            <person name="Istrail S."/>
            <person name="Sutton G."/>
            <person name="Florea L."/>
            <person name="Halpern A.L."/>
            <person name="Mobarry C.M."/>
            <person name="Lippert R."/>
            <person name="Walenz B."/>
            <person name="Shatkay H."/>
            <person name="Dew I."/>
            <person name="Miller J.R."/>
            <person name="Flanigan M.J."/>
            <person name="Edwards N.J."/>
            <person name="Bolanos R."/>
            <person name="Fasulo D."/>
            <person name="Halldorsson B.V."/>
            <person name="Hannenhalli S."/>
            <person name="Turner R."/>
            <person name="Yooseph S."/>
            <person name="Lu F."/>
            <person name="Nusskern D.R."/>
            <person name="Shue B.C."/>
            <person name="Zheng X.H."/>
            <person name="Zhong F."/>
            <person name="Delcher A.L."/>
            <person name="Huson D.H."/>
            <person name="Kravitz S.A."/>
            <person name="Mouchard L."/>
            <person name="Reinert K."/>
            <person name="Remington K.A."/>
            <person name="Clark A.G."/>
            <person name="Waterman M.S."/>
            <person name="Eichler E.E."/>
            <person name="Adams M.D."/>
            <person name="Hunkapiller M.W."/>
            <person name="Myers E.W."/>
            <person name="Venter J.C."/>
        </authorList>
    </citation>
    <scope>NUCLEOTIDE SEQUENCE [LARGE SCALE GENOMIC DNA]</scope>
</reference>
<reference key="7">
    <citation type="journal article" date="2004" name="Genome Res.">
        <title>The status, quality, and expansion of the NIH full-length cDNA project: the Mammalian Gene Collection (MGC).</title>
        <authorList>
            <consortium name="The MGC Project Team"/>
        </authorList>
    </citation>
    <scope>NUCLEOTIDE SEQUENCE [LARGE SCALE MRNA]</scope>
    <source>
        <tissue>Colon</tissue>
    </source>
</reference>
<reference key="8">
    <citation type="journal article" date="2011" name="FEBS Lett.">
        <title>FoxO regulates expression of decidual protein induced by progesterone (DEPP) in human endothelial cells.</title>
        <authorList>
            <person name="Chen S."/>
            <person name="Gai J."/>
            <person name="Wang Y."/>
            <person name="Li H."/>
        </authorList>
    </citation>
    <scope>INDUCTION BY HYPOXIA</scope>
</reference>
<reference key="9">
    <citation type="journal article" date="2014" name="Biochim. Biophys. Acta">
        <title>The c10orf10 gene product is a new link between oxidative stress and autophagy.</title>
        <authorList>
            <person name="Stepp M.W."/>
            <person name="Folz R.J."/>
            <person name="Yu J."/>
            <person name="Zelko I.N."/>
        </authorList>
    </citation>
    <scope>FUNCTION</scope>
    <scope>SUBCELLULAR LOCATION</scope>
</reference>
<reference key="10">
    <citation type="journal article" date="2014" name="Mol. Cancer">
        <title>C10ORF10/DEPP, a transcriptional target of FOXO3, regulates ROS-sensitivity in human neuroblastoma.</title>
        <authorList>
            <person name="Salcher S."/>
            <person name="Hagenbuchner J."/>
            <person name="Geiger K."/>
            <person name="Seiter M.A."/>
            <person name="Rainer J."/>
            <person name="Kofler R."/>
            <person name="Hermann M."/>
            <person name="Kiechl-Kohlendorfer U."/>
            <person name="Ausserlechner M.J."/>
            <person name="Obexer P."/>
        </authorList>
    </citation>
    <scope>SUBCELLULAR LOCATION</scope>
    <scope>FUNCTION</scope>
</reference>
<reference key="11">
    <citation type="journal article" date="2017" name="Mol. Cancer">
        <title>C10ORF10/DEPP-mediated ROS accumulation is a critical modulator of FOXO3-induced autophagy.</title>
        <authorList>
            <person name="Salcher S."/>
            <person name="Hermann M."/>
            <person name="Kiechl-Kohlendorfer U."/>
            <person name="Ausserlechner M.J."/>
            <person name="Obexer P."/>
        </authorList>
    </citation>
    <scope>FUNCTION</scope>
    <scope>INDUCTION</scope>
</reference>
<organism>
    <name type="scientific">Homo sapiens</name>
    <name type="common">Human</name>
    <dbReference type="NCBI Taxonomy" id="9606"/>
    <lineage>
        <taxon>Eukaryota</taxon>
        <taxon>Metazoa</taxon>
        <taxon>Chordata</taxon>
        <taxon>Craniata</taxon>
        <taxon>Vertebrata</taxon>
        <taxon>Euteleostomi</taxon>
        <taxon>Mammalia</taxon>
        <taxon>Eutheria</taxon>
        <taxon>Euarchontoglires</taxon>
        <taxon>Primates</taxon>
        <taxon>Haplorrhini</taxon>
        <taxon>Catarrhini</taxon>
        <taxon>Hominidae</taxon>
        <taxon>Homo</taxon>
    </lineage>
</organism>
<comment type="function">
    <text evidence="4 5 6">Acts as a critical modulator of FOXO3-induced autophagy via increased cellular ROS.</text>
</comment>
<comment type="subcellular location">
    <subcellularLocation>
        <location evidence="4 5">Cytoplasm</location>
    </subcellularLocation>
    <subcellularLocation>
        <location evidence="5">Peroxisome</location>
    </subcellularLocation>
    <subcellularLocation>
        <location evidence="5">Mitochondrion</location>
    </subcellularLocation>
    <text evidence="4">May localize to aggresomes (PubMed:24530860).</text>
</comment>
<comment type="tissue specificity">
    <text evidence="2">Expressed in various tissues, including pancreas, placenta, ovary, testis and kidney.</text>
</comment>
<comment type="developmental stage">
    <text evidence="2">High levels in first trimester deciduas. Higher levels in the endometria during secretory phase than the proliferative phase, especially after the mid-secretory phase.</text>
</comment>
<comment type="induction">
    <text evidence="2 3 6">By progesterone, testosterone and, to a much lower extent, estrogen. Induced by oxidative stress via FOXO3 activation (PubMed:28545464). Up-regulated by hypoxia (at protein level).</text>
</comment>
<dbReference type="EMBL" id="AB022718">
    <property type="protein sequence ID" value="BAA74504.1"/>
    <property type="molecule type" value="mRNA"/>
</dbReference>
<dbReference type="EMBL" id="AB025244">
    <property type="protein sequence ID" value="BAC87794.1"/>
    <property type="molecule type" value="mRNA"/>
</dbReference>
<dbReference type="EMBL" id="AL136653">
    <property type="protein sequence ID" value="CAB66588.1"/>
    <property type="molecule type" value="mRNA"/>
</dbReference>
<dbReference type="EMBL" id="AK002191">
    <property type="protein sequence ID" value="BAG51027.1"/>
    <property type="molecule type" value="mRNA"/>
</dbReference>
<dbReference type="EMBL" id="AK312496">
    <property type="protein sequence ID" value="BAG35398.1"/>
    <property type="molecule type" value="mRNA"/>
</dbReference>
<dbReference type="EMBL" id="AL353801">
    <property type="status" value="NOT_ANNOTATED_CDS"/>
    <property type="molecule type" value="Genomic_DNA"/>
</dbReference>
<dbReference type="EMBL" id="CH471160">
    <property type="protein sequence ID" value="EAW86629.1"/>
    <property type="molecule type" value="Genomic_DNA"/>
</dbReference>
<dbReference type="EMBL" id="BC011402">
    <property type="protein sequence ID" value="AAH11402.1"/>
    <property type="molecule type" value="mRNA"/>
</dbReference>
<dbReference type="CCDS" id="CCDS7210.1"/>
<dbReference type="PIR" id="T46271">
    <property type="entry name" value="T46271"/>
</dbReference>
<dbReference type="RefSeq" id="NP_008952.1">
    <property type="nucleotide sequence ID" value="NM_007021.4"/>
</dbReference>
<dbReference type="BioGRID" id="116251">
    <property type="interactions" value="9"/>
</dbReference>
<dbReference type="FunCoup" id="Q9NTK1">
    <property type="interactions" value="350"/>
</dbReference>
<dbReference type="IntAct" id="Q9NTK1">
    <property type="interactions" value="9"/>
</dbReference>
<dbReference type="STRING" id="9606.ENSP00000298295"/>
<dbReference type="GlyGen" id="Q9NTK1">
    <property type="glycosylation" value="1 site, 1 O-linked glycan (1 site)"/>
</dbReference>
<dbReference type="iPTMnet" id="Q9NTK1"/>
<dbReference type="PhosphoSitePlus" id="Q9NTK1"/>
<dbReference type="BioMuta" id="C10orf10"/>
<dbReference type="DMDM" id="68565547"/>
<dbReference type="jPOST" id="Q9NTK1"/>
<dbReference type="MassIVE" id="Q9NTK1"/>
<dbReference type="PaxDb" id="9606-ENSP00000298295"/>
<dbReference type="PeptideAtlas" id="Q9NTK1"/>
<dbReference type="Antibodypedia" id="62493">
    <property type="antibodies" value="24 antibodies from 11 providers"/>
</dbReference>
<dbReference type="DNASU" id="11067"/>
<dbReference type="Ensembl" id="ENST00000298295.4">
    <property type="protein sequence ID" value="ENSP00000298295.3"/>
    <property type="gene ID" value="ENSG00000165507.9"/>
</dbReference>
<dbReference type="GeneID" id="11067"/>
<dbReference type="KEGG" id="hsa:11067"/>
<dbReference type="MANE-Select" id="ENST00000298295.4">
    <property type="protein sequence ID" value="ENSP00000298295.3"/>
    <property type="RefSeq nucleotide sequence ID" value="NM_007021.4"/>
    <property type="RefSeq protein sequence ID" value="NP_008952.1"/>
</dbReference>
<dbReference type="UCSC" id="uc001jbr.5">
    <property type="organism name" value="human"/>
</dbReference>
<dbReference type="AGR" id="HGNC:23355"/>
<dbReference type="CTD" id="11067"/>
<dbReference type="DisGeNET" id="11067"/>
<dbReference type="GeneCards" id="DEPP1"/>
<dbReference type="HGNC" id="HGNC:23355">
    <property type="gene designation" value="DEPP1"/>
</dbReference>
<dbReference type="HPA" id="ENSG00000165507">
    <property type="expression patterns" value="Tissue enhanced (adipose tissue, breast)"/>
</dbReference>
<dbReference type="MIM" id="611309">
    <property type="type" value="gene"/>
</dbReference>
<dbReference type="neXtProt" id="NX_Q9NTK1"/>
<dbReference type="OpenTargets" id="ENSG00000165507"/>
<dbReference type="PharmGKB" id="PA128394583"/>
<dbReference type="VEuPathDB" id="HostDB:ENSG00000165507"/>
<dbReference type="eggNOG" id="ENOG502T1TA">
    <property type="taxonomic scope" value="Eukaryota"/>
</dbReference>
<dbReference type="GeneTree" id="ENSGT00390000017909"/>
<dbReference type="HOGENOM" id="CLU_114587_0_0_1"/>
<dbReference type="InParanoid" id="Q9NTK1"/>
<dbReference type="OMA" id="PHRQMDS"/>
<dbReference type="OrthoDB" id="8916819at2759"/>
<dbReference type="PAN-GO" id="Q9NTK1">
    <property type="GO annotations" value="2 GO annotations based on evolutionary models"/>
</dbReference>
<dbReference type="PhylomeDB" id="Q9NTK1"/>
<dbReference type="PathwayCommons" id="Q9NTK1"/>
<dbReference type="SignaLink" id="Q9NTK1"/>
<dbReference type="BioGRID-ORCS" id="11067">
    <property type="hits" value="18 hits in 1142 CRISPR screens"/>
</dbReference>
<dbReference type="ChiTaRS" id="DEPP1">
    <property type="organism name" value="human"/>
</dbReference>
<dbReference type="GeneWiki" id="C10orf10"/>
<dbReference type="GenomeRNAi" id="11067"/>
<dbReference type="Pharos" id="Q9NTK1">
    <property type="development level" value="Tbio"/>
</dbReference>
<dbReference type="PRO" id="PR:Q9NTK1"/>
<dbReference type="Proteomes" id="UP000005640">
    <property type="component" value="Chromosome 10"/>
</dbReference>
<dbReference type="RNAct" id="Q9NTK1">
    <property type="molecule type" value="protein"/>
</dbReference>
<dbReference type="Bgee" id="ENSG00000165507">
    <property type="expression patterns" value="Expressed in type B pancreatic cell and 197 other cell types or tissues"/>
</dbReference>
<dbReference type="ExpressionAtlas" id="Q9NTK1">
    <property type="expression patterns" value="baseline and differential"/>
</dbReference>
<dbReference type="GO" id="GO:0005737">
    <property type="term" value="C:cytoplasm"/>
    <property type="evidence" value="ECO:0000314"/>
    <property type="project" value="UniProtKB"/>
</dbReference>
<dbReference type="GO" id="GO:0043231">
    <property type="term" value="C:intracellular membrane-bounded organelle"/>
    <property type="evidence" value="ECO:0000314"/>
    <property type="project" value="HPA"/>
</dbReference>
<dbReference type="GO" id="GO:0005739">
    <property type="term" value="C:mitochondrion"/>
    <property type="evidence" value="ECO:0000314"/>
    <property type="project" value="UniProtKB"/>
</dbReference>
<dbReference type="GO" id="GO:0005777">
    <property type="term" value="C:peroxisome"/>
    <property type="evidence" value="ECO:0000314"/>
    <property type="project" value="UniProtKB"/>
</dbReference>
<dbReference type="GO" id="GO:0006914">
    <property type="term" value="P:autophagy"/>
    <property type="evidence" value="ECO:0007669"/>
    <property type="project" value="UniProtKB-KW"/>
</dbReference>
<dbReference type="GO" id="GO:0010506">
    <property type="term" value="P:regulation of autophagy"/>
    <property type="evidence" value="ECO:0000314"/>
    <property type="project" value="UniProtKB"/>
</dbReference>
<dbReference type="InterPro" id="IPR020133">
    <property type="entry name" value="DEPP"/>
</dbReference>
<dbReference type="PANTHER" id="PTHR15426">
    <property type="entry name" value="PROTEIN DEPP1"/>
    <property type="match status" value="1"/>
</dbReference>
<dbReference type="PANTHER" id="PTHR15426:SF6">
    <property type="entry name" value="PROTEIN DEPP1"/>
    <property type="match status" value="1"/>
</dbReference>
<dbReference type="Pfam" id="PF15343">
    <property type="entry name" value="DEPP"/>
    <property type="match status" value="1"/>
</dbReference>
<evidence type="ECO:0000256" key="1">
    <source>
        <dbReference type="SAM" id="MobiDB-lite"/>
    </source>
</evidence>
<evidence type="ECO:0000269" key="2">
    <source>
    </source>
</evidence>
<evidence type="ECO:0000269" key="3">
    <source>
    </source>
</evidence>
<evidence type="ECO:0000269" key="4">
    <source>
    </source>
</evidence>
<evidence type="ECO:0000269" key="5">
    <source>
    </source>
</evidence>
<evidence type="ECO:0000269" key="6">
    <source>
    </source>
</evidence>
<evidence type="ECO:0000303" key="7">
    <source>
    </source>
</evidence>
<evidence type="ECO:0000303" key="8">
    <source ref="2"/>
</evidence>
<evidence type="ECO:0000305" key="9"/>
<evidence type="ECO:0000312" key="10">
    <source>
        <dbReference type="HGNC" id="HGNC:23355"/>
    </source>
</evidence>
<sequence length="212" mass="23406">MRSRLLLSVAHLPTIRETTEEMLLGGPGQEPPPSPSLDDYVRSISRLAQPTSVLDKATAQGQPRPPHRPAQACRKGRPAVSLRDITARFSGQQPTLPMADTVDPLDWLFGESQEKQPSQRDLPRRTGPSAGLWGPHRQMDSSKPMGAPRGRLCEARMPGHSLARPPQDGQQSSDLRSWTFGQSAQAMASRHRPRPSSVLRTLYSHLPVIHEL</sequence>
<name>DEPP1_HUMAN</name>
<gene>
    <name evidence="10" type="primary">DEPP1</name>
    <name type="synonym">C10orf10</name>
    <name evidence="7" type="synonym">DEPP</name>
    <name type="synonym">FIG</name>
</gene>
<protein>
    <recommendedName>
        <fullName evidence="9">Protein DEPP1</fullName>
    </recommendedName>
    <alternativeName>
        <fullName evidence="7">Decidual protein induced by progesterone</fullName>
    </alternativeName>
    <alternativeName>
        <fullName evidence="8">Fasting-induced gene protein</fullName>
        <shortName evidence="8">FIG</shortName>
    </alternativeName>
</protein>
<feature type="chain" id="PRO_0000079867" description="Protein DEPP1">
    <location>
        <begin position="1"/>
        <end position="212"/>
    </location>
</feature>
<feature type="region of interest" description="Disordered" evidence="1">
    <location>
        <begin position="20"/>
        <end position="39"/>
    </location>
</feature>
<feature type="region of interest" description="Disordered" evidence="1">
    <location>
        <begin position="49"/>
        <end position="79"/>
    </location>
</feature>
<feature type="region of interest" description="Disordered" evidence="1">
    <location>
        <begin position="113"/>
        <end position="176"/>
    </location>
</feature>
<feature type="compositionally biased region" description="Basic and acidic residues" evidence="1">
    <location>
        <begin position="113"/>
        <end position="124"/>
    </location>
</feature>
<feature type="sequence variant" id="VAR_050951" description="In dbSNP:rs11555140.">
    <original>I</original>
    <variation>M</variation>
    <location>
        <position position="44"/>
    </location>
</feature>
<feature type="sequence conflict" description="In Ref. 2; BAC87794." evidence="9" ref="2">
    <original>RQM</original>
    <variation>QTDS</variation>
    <location>
        <begin position="137"/>
        <end position="139"/>
    </location>
</feature>
<feature type="sequence conflict" description="In Ref. 3; CAB66588." evidence="9" ref="3">
    <original>M</original>
    <variation>T</variation>
    <location>
        <position position="145"/>
    </location>
</feature>
<proteinExistence type="evidence at protein level"/>
<accession>Q9NTK1</accession>
<accession>B2R6A1</accession>
<accession>O94997</accession>
<accession>Q5T735</accession>
<accession>Q76MX8</accession>
<keyword id="KW-0072">Autophagy</keyword>
<keyword id="KW-0963">Cytoplasm</keyword>
<keyword id="KW-0496">Mitochondrion</keyword>
<keyword id="KW-0576">Peroxisome</keyword>
<keyword id="KW-1267">Proteomics identification</keyword>
<keyword id="KW-1185">Reference proteome</keyword>